<reference key="1">
    <citation type="journal article" date="1992" name="Plant Physiol.">
        <title>Molecular analysis of the psaC gene encoding the FA/FB apoprotein of photosystem I in the filamentous cyanobacterium Anabaena sp. ATCC 29413.</title>
        <authorList>
            <person name="Mannan R.M."/>
            <person name="Pakrasi H.B."/>
        </authorList>
    </citation>
    <scope>NUCLEOTIDE SEQUENCE [GENOMIC DNA]</scope>
</reference>
<reference key="2">
    <citation type="journal article" date="2014" name="Stand. Genomic Sci.">
        <title>Complete genome sequence of Anabaena variabilis ATCC 29413.</title>
        <authorList>
            <person name="Thiel T."/>
            <person name="Pratte B.S."/>
            <person name="Zhong J."/>
            <person name="Goodwin L."/>
            <person name="Copeland A."/>
            <person name="Lucas S."/>
            <person name="Han C."/>
            <person name="Pitluck S."/>
            <person name="Land M.L."/>
            <person name="Kyrpides N.C."/>
            <person name="Woyke T."/>
        </authorList>
    </citation>
    <scope>NUCLEOTIDE SEQUENCE [LARGE SCALE GENOMIC DNA]</scope>
    <source>
        <strain>ATCC 29413 / PCC 7937</strain>
    </source>
</reference>
<reference key="3">
    <citation type="journal article" date="1992" name="J. Biol. Chem.">
        <title>Purification and characterization of the photosystem I complex from the filamentous cyanobacterium Anabaena variabilis ATCC 29413.</title>
        <authorList>
            <person name="Nyhus K.J."/>
            <person name="Ikeuchi M."/>
            <person name="Inoue Y."/>
            <person name="Whitmarsh J."/>
            <person name="Pakrasi H.B."/>
        </authorList>
    </citation>
    <scope>PROTEIN SEQUENCE OF 2-39</scope>
</reference>
<reference key="4">
    <citation type="journal article" date="1994" name="Arch. Biochem. Biophys.">
        <title>The PsaC protein is necessary for the stable association of the PsaD, PsaE, and PsaL proteins in the photosystem I complex: analysis of a cyanobacterial mutant strain.</title>
        <authorList>
            <person name="Mannan R.M."/>
            <person name="Pakrasi H.B."/>
            <person name="Sonoike K."/>
        </authorList>
    </citation>
    <scope>FUNCTION</scope>
</reference>
<reference key="5">
    <citation type="journal article" date="1996" name="EMBO J.">
        <title>Active photosynthesis in cyanobacterial mutants with directed modifications in the ligands for two iron-sulfur clusters on the PsaC protein of photosystem I.</title>
        <authorList>
            <person name="Mannan R.M."/>
            <person name="He W.-Z."/>
            <person name="Metzger S.U."/>
            <person name="Whitmarsh J."/>
            <person name="Malkin R."/>
            <person name="Pakrasi H.B."/>
        </authorList>
    </citation>
    <scope>MUTAGENESIS OF CYS-14 AND CYS-51</scope>
</reference>
<proteinExistence type="evidence at protein level"/>
<accession>P0A411</accession>
<accession>P23392</accession>
<accession>P31086</accession>
<accession>Q3M7E5</accession>
<organism>
    <name type="scientific">Trichormus variabilis (strain ATCC 29413 / PCC 7937)</name>
    <name type="common">Anabaena variabilis</name>
    <dbReference type="NCBI Taxonomy" id="240292"/>
    <lineage>
        <taxon>Bacteria</taxon>
        <taxon>Bacillati</taxon>
        <taxon>Cyanobacteriota</taxon>
        <taxon>Cyanophyceae</taxon>
        <taxon>Nostocales</taxon>
        <taxon>Nostocaceae</taxon>
        <taxon>Trichormus</taxon>
    </lineage>
</organism>
<protein>
    <recommendedName>
        <fullName evidence="1">Photosystem I iron-sulfur center</fullName>
        <ecNumber evidence="1">1.97.1.12</ecNumber>
    </recommendedName>
    <alternativeName>
        <fullName evidence="1">9 kDa polypeptide</fullName>
    </alternativeName>
    <alternativeName>
        <fullName evidence="1">PSI-C</fullName>
    </alternativeName>
    <alternativeName>
        <fullName evidence="1">Photosystem I subunit VII</fullName>
    </alternativeName>
    <alternativeName>
        <fullName evidence="1">PsaC</fullName>
    </alternativeName>
</protein>
<evidence type="ECO:0000255" key="1">
    <source>
        <dbReference type="HAMAP-Rule" id="MF_01303"/>
    </source>
</evidence>
<evidence type="ECO:0000269" key="2">
    <source>
    </source>
</evidence>
<evidence type="ECO:0000269" key="3">
    <source>
    </source>
</evidence>
<evidence type="ECO:0000269" key="4">
    <source>
    </source>
</evidence>
<dbReference type="EC" id="1.97.1.12" evidence="1"/>
<dbReference type="EMBL" id="X57153">
    <property type="protein sequence ID" value="CAA40443.1"/>
    <property type="molecule type" value="Genomic_DNA"/>
</dbReference>
<dbReference type="EMBL" id="CP000117">
    <property type="protein sequence ID" value="ABA23091.1"/>
    <property type="molecule type" value="Genomic_DNA"/>
</dbReference>
<dbReference type="PIR" id="S14475">
    <property type="entry name" value="FEAICV"/>
</dbReference>
<dbReference type="RefSeq" id="WP_010997613.1">
    <property type="nucleotide sequence ID" value="NC_007413.1"/>
</dbReference>
<dbReference type="SMR" id="P0A411"/>
<dbReference type="STRING" id="240292.Ava_3484"/>
<dbReference type="GeneID" id="58726273"/>
<dbReference type="KEGG" id="ava:Ava_3484"/>
<dbReference type="eggNOG" id="COG1143">
    <property type="taxonomic scope" value="Bacteria"/>
</dbReference>
<dbReference type="HOGENOM" id="CLU_139698_8_0_3"/>
<dbReference type="Proteomes" id="UP000002533">
    <property type="component" value="Chromosome"/>
</dbReference>
<dbReference type="GO" id="GO:0009522">
    <property type="term" value="C:photosystem I"/>
    <property type="evidence" value="ECO:0007669"/>
    <property type="project" value="UniProtKB-KW"/>
</dbReference>
<dbReference type="GO" id="GO:0031676">
    <property type="term" value="C:plasma membrane-derived thylakoid membrane"/>
    <property type="evidence" value="ECO:0007669"/>
    <property type="project" value="UniProtKB-SubCell"/>
</dbReference>
<dbReference type="GO" id="GO:0051539">
    <property type="term" value="F:4 iron, 4 sulfur cluster binding"/>
    <property type="evidence" value="ECO:0007669"/>
    <property type="project" value="UniProtKB-KW"/>
</dbReference>
<dbReference type="GO" id="GO:0009055">
    <property type="term" value="F:electron transfer activity"/>
    <property type="evidence" value="ECO:0007669"/>
    <property type="project" value="UniProtKB-UniRule"/>
</dbReference>
<dbReference type="GO" id="GO:0046872">
    <property type="term" value="F:metal ion binding"/>
    <property type="evidence" value="ECO:0007669"/>
    <property type="project" value="UniProtKB-KW"/>
</dbReference>
<dbReference type="GO" id="GO:0016491">
    <property type="term" value="F:oxidoreductase activity"/>
    <property type="evidence" value="ECO:0007669"/>
    <property type="project" value="UniProtKB-KW"/>
</dbReference>
<dbReference type="GO" id="GO:0009773">
    <property type="term" value="P:photosynthetic electron transport in photosystem I"/>
    <property type="evidence" value="ECO:0007669"/>
    <property type="project" value="InterPro"/>
</dbReference>
<dbReference type="FunFam" id="3.30.70.20:FF:000001">
    <property type="entry name" value="Photosystem I iron-sulfur center"/>
    <property type="match status" value="1"/>
</dbReference>
<dbReference type="Gene3D" id="3.30.70.20">
    <property type="match status" value="1"/>
</dbReference>
<dbReference type="HAMAP" id="MF_01303">
    <property type="entry name" value="PSI_PsaC"/>
    <property type="match status" value="1"/>
</dbReference>
<dbReference type="InterPro" id="IPR017896">
    <property type="entry name" value="4Fe4S_Fe-S-bd"/>
</dbReference>
<dbReference type="InterPro" id="IPR017900">
    <property type="entry name" value="4Fe4S_Fe_S_CS"/>
</dbReference>
<dbReference type="InterPro" id="IPR050157">
    <property type="entry name" value="PSI_iron-sulfur_center"/>
</dbReference>
<dbReference type="InterPro" id="IPR017491">
    <property type="entry name" value="PSI_PsaC"/>
</dbReference>
<dbReference type="NCBIfam" id="TIGR03048">
    <property type="entry name" value="PS_I_psaC"/>
    <property type="match status" value="1"/>
</dbReference>
<dbReference type="PANTHER" id="PTHR24960:SF79">
    <property type="entry name" value="PHOTOSYSTEM I IRON-SULFUR CENTER"/>
    <property type="match status" value="1"/>
</dbReference>
<dbReference type="PANTHER" id="PTHR24960">
    <property type="entry name" value="PHOTOSYSTEM I IRON-SULFUR CENTER-RELATED"/>
    <property type="match status" value="1"/>
</dbReference>
<dbReference type="Pfam" id="PF12838">
    <property type="entry name" value="Fer4_7"/>
    <property type="match status" value="1"/>
</dbReference>
<dbReference type="SUPFAM" id="SSF54862">
    <property type="entry name" value="4Fe-4S ferredoxins"/>
    <property type="match status" value="1"/>
</dbReference>
<dbReference type="PROSITE" id="PS00198">
    <property type="entry name" value="4FE4S_FER_1"/>
    <property type="match status" value="2"/>
</dbReference>
<dbReference type="PROSITE" id="PS51379">
    <property type="entry name" value="4FE4S_FER_2"/>
    <property type="match status" value="2"/>
</dbReference>
<sequence>MSHTVKIYDTCIGCTQCVRACPTDVLEMVPWDGCKAAQVASSPRTEDCVGCKRCETACPTDFLSIRVYLGAETTRSMGLAY</sequence>
<comment type="function">
    <text evidence="1 3">Apoprotein for the two 4Fe-4S centers FA and FB of photosystem I (PSI); essential for photochemical activity. FB is the terminal electron acceptor of PSI, donating electrons to ferredoxin. The C-terminus interacts with PsaA/B/D and helps assemble the protein into the PSI complex. Required for binding of PsaD and PsaE to PSI. PSI is a plastocyanin/cytochrome c6-ferredoxin oxidoreductase, converting photonic excitation into a charge separation, which transfers an electron from the donor P700 chlorophyll pair to the spectroscopically characterized acceptors A0, A1, FX, FA and FB in turn.</text>
</comment>
<comment type="catalytic activity">
    <reaction evidence="1">
        <text>reduced [plastocyanin] + hnu + oxidized [2Fe-2S]-[ferredoxin] = oxidized [plastocyanin] + reduced [2Fe-2S]-[ferredoxin]</text>
        <dbReference type="Rhea" id="RHEA:30407"/>
        <dbReference type="Rhea" id="RHEA-COMP:10000"/>
        <dbReference type="Rhea" id="RHEA-COMP:10001"/>
        <dbReference type="Rhea" id="RHEA-COMP:10039"/>
        <dbReference type="Rhea" id="RHEA-COMP:10040"/>
        <dbReference type="ChEBI" id="CHEBI:29036"/>
        <dbReference type="ChEBI" id="CHEBI:30212"/>
        <dbReference type="ChEBI" id="CHEBI:33737"/>
        <dbReference type="ChEBI" id="CHEBI:33738"/>
        <dbReference type="ChEBI" id="CHEBI:49552"/>
        <dbReference type="EC" id="1.97.1.12"/>
    </reaction>
</comment>
<comment type="cofactor">
    <cofactor>
        <name>[4Fe-4S] cluster</name>
        <dbReference type="ChEBI" id="CHEBI:49883"/>
    </cofactor>
    <text>Binds 2 [4Fe-4S] clusters. Cluster 2 is most probably the spectroscopically characterized electron acceptor FA and cluster 1 is most probably FB.</text>
</comment>
<comment type="subunit">
    <text>The cyanobacterial PSI reaction center is composed of one copy each of PsaA,B,C,D,E,F,I,J,K,L,M and X, and forms trimeric complexes.</text>
</comment>
<comment type="subcellular location">
    <subcellularLocation>
        <location>Cellular thylakoid membrane</location>
        <topology>Peripheral membrane protein</topology>
        <orientation>Cytoplasmic side</orientation>
    </subcellularLocation>
</comment>
<gene>
    <name evidence="1" type="primary">psaC</name>
    <name type="ordered locus">Ava_3484</name>
</gene>
<feature type="initiator methionine" description="Removed" evidence="2">
    <location>
        <position position="1"/>
    </location>
</feature>
<feature type="chain" id="PRO_0000062009" description="Photosystem I iron-sulfur center">
    <location>
        <begin position="2"/>
        <end position="81"/>
    </location>
</feature>
<feature type="domain" description="4Fe-4S ferredoxin-type 1" evidence="1">
    <location>
        <begin position="2"/>
        <end position="31"/>
    </location>
</feature>
<feature type="domain" description="4Fe-4S ferredoxin-type 2" evidence="1">
    <location>
        <begin position="39"/>
        <end position="68"/>
    </location>
</feature>
<feature type="binding site">
    <location>
        <position position="11"/>
    </location>
    <ligand>
        <name>[4Fe-4S] cluster</name>
        <dbReference type="ChEBI" id="CHEBI:49883"/>
        <label>1</label>
    </ligand>
</feature>
<feature type="binding site">
    <location>
        <position position="14"/>
    </location>
    <ligand>
        <name>[4Fe-4S] cluster</name>
        <dbReference type="ChEBI" id="CHEBI:49883"/>
        <label>1</label>
    </ligand>
</feature>
<feature type="binding site">
    <location>
        <position position="17"/>
    </location>
    <ligand>
        <name>[4Fe-4S] cluster</name>
        <dbReference type="ChEBI" id="CHEBI:49883"/>
        <label>1</label>
    </ligand>
</feature>
<feature type="binding site">
    <location>
        <position position="21"/>
    </location>
    <ligand>
        <name>[4Fe-4S] cluster</name>
        <dbReference type="ChEBI" id="CHEBI:49883"/>
        <label>2</label>
    </ligand>
</feature>
<feature type="binding site">
    <location>
        <position position="48"/>
    </location>
    <ligand>
        <name>[4Fe-4S] cluster</name>
        <dbReference type="ChEBI" id="CHEBI:49883"/>
        <label>2</label>
    </ligand>
</feature>
<feature type="binding site">
    <location>
        <position position="51"/>
    </location>
    <ligand>
        <name>[4Fe-4S] cluster</name>
        <dbReference type="ChEBI" id="CHEBI:49883"/>
        <label>2</label>
    </ligand>
</feature>
<feature type="binding site">
    <location>
        <position position="54"/>
    </location>
    <ligand>
        <name>[4Fe-4S] cluster</name>
        <dbReference type="ChEBI" id="CHEBI:49883"/>
        <label>2</label>
    </ligand>
</feature>
<feature type="binding site">
    <location>
        <position position="58"/>
    </location>
    <ligand>
        <name>[4Fe-4S] cluster</name>
        <dbReference type="ChEBI" id="CHEBI:49883"/>
        <label>1</label>
    </ligand>
</feature>
<feature type="mutagenesis site" description="Loss of FB, mutant is capable of growth, although with reduced rate and quantum efficiency." evidence="4">
    <original>C</original>
    <variation>D</variation>
    <location>
        <position position="14"/>
    </location>
</feature>
<feature type="mutagenesis site" description="Generates a modified FA (not 3Fe-4S), mutant is capable of normal growth." evidence="4">
    <original>C</original>
    <variation>D</variation>
    <location>
        <position position="51"/>
    </location>
</feature>
<name>PSAC_TRIV2</name>
<keyword id="KW-0004">4Fe-4S</keyword>
<keyword id="KW-0903">Direct protein sequencing</keyword>
<keyword id="KW-0249">Electron transport</keyword>
<keyword id="KW-0408">Iron</keyword>
<keyword id="KW-0411">Iron-sulfur</keyword>
<keyword id="KW-0472">Membrane</keyword>
<keyword id="KW-0479">Metal-binding</keyword>
<keyword id="KW-0560">Oxidoreductase</keyword>
<keyword id="KW-0602">Photosynthesis</keyword>
<keyword id="KW-0603">Photosystem I</keyword>
<keyword id="KW-0677">Repeat</keyword>
<keyword id="KW-0793">Thylakoid</keyword>
<keyword id="KW-0813">Transport</keyword>